<reference key="1">
    <citation type="journal article" date="2005" name="Science">
        <title>The transcriptional landscape of the mammalian genome.</title>
        <authorList>
            <person name="Carninci P."/>
            <person name="Kasukawa T."/>
            <person name="Katayama S."/>
            <person name="Gough J."/>
            <person name="Frith M.C."/>
            <person name="Maeda N."/>
            <person name="Oyama R."/>
            <person name="Ravasi T."/>
            <person name="Lenhard B."/>
            <person name="Wells C."/>
            <person name="Kodzius R."/>
            <person name="Shimokawa K."/>
            <person name="Bajic V.B."/>
            <person name="Brenner S.E."/>
            <person name="Batalov S."/>
            <person name="Forrest A.R."/>
            <person name="Zavolan M."/>
            <person name="Davis M.J."/>
            <person name="Wilming L.G."/>
            <person name="Aidinis V."/>
            <person name="Allen J.E."/>
            <person name="Ambesi-Impiombato A."/>
            <person name="Apweiler R."/>
            <person name="Aturaliya R.N."/>
            <person name="Bailey T.L."/>
            <person name="Bansal M."/>
            <person name="Baxter L."/>
            <person name="Beisel K.W."/>
            <person name="Bersano T."/>
            <person name="Bono H."/>
            <person name="Chalk A.M."/>
            <person name="Chiu K.P."/>
            <person name="Choudhary V."/>
            <person name="Christoffels A."/>
            <person name="Clutterbuck D.R."/>
            <person name="Crowe M.L."/>
            <person name="Dalla E."/>
            <person name="Dalrymple B.P."/>
            <person name="de Bono B."/>
            <person name="Della Gatta G."/>
            <person name="di Bernardo D."/>
            <person name="Down T."/>
            <person name="Engstrom P."/>
            <person name="Fagiolini M."/>
            <person name="Faulkner G."/>
            <person name="Fletcher C.F."/>
            <person name="Fukushima T."/>
            <person name="Furuno M."/>
            <person name="Futaki S."/>
            <person name="Gariboldi M."/>
            <person name="Georgii-Hemming P."/>
            <person name="Gingeras T.R."/>
            <person name="Gojobori T."/>
            <person name="Green R.E."/>
            <person name="Gustincich S."/>
            <person name="Harbers M."/>
            <person name="Hayashi Y."/>
            <person name="Hensch T.K."/>
            <person name="Hirokawa N."/>
            <person name="Hill D."/>
            <person name="Huminiecki L."/>
            <person name="Iacono M."/>
            <person name="Ikeo K."/>
            <person name="Iwama A."/>
            <person name="Ishikawa T."/>
            <person name="Jakt M."/>
            <person name="Kanapin A."/>
            <person name="Katoh M."/>
            <person name="Kawasawa Y."/>
            <person name="Kelso J."/>
            <person name="Kitamura H."/>
            <person name="Kitano H."/>
            <person name="Kollias G."/>
            <person name="Krishnan S.P."/>
            <person name="Kruger A."/>
            <person name="Kummerfeld S.K."/>
            <person name="Kurochkin I.V."/>
            <person name="Lareau L.F."/>
            <person name="Lazarevic D."/>
            <person name="Lipovich L."/>
            <person name="Liu J."/>
            <person name="Liuni S."/>
            <person name="McWilliam S."/>
            <person name="Madan Babu M."/>
            <person name="Madera M."/>
            <person name="Marchionni L."/>
            <person name="Matsuda H."/>
            <person name="Matsuzawa S."/>
            <person name="Miki H."/>
            <person name="Mignone F."/>
            <person name="Miyake S."/>
            <person name="Morris K."/>
            <person name="Mottagui-Tabar S."/>
            <person name="Mulder N."/>
            <person name="Nakano N."/>
            <person name="Nakauchi H."/>
            <person name="Ng P."/>
            <person name="Nilsson R."/>
            <person name="Nishiguchi S."/>
            <person name="Nishikawa S."/>
            <person name="Nori F."/>
            <person name="Ohara O."/>
            <person name="Okazaki Y."/>
            <person name="Orlando V."/>
            <person name="Pang K.C."/>
            <person name="Pavan W.J."/>
            <person name="Pavesi G."/>
            <person name="Pesole G."/>
            <person name="Petrovsky N."/>
            <person name="Piazza S."/>
            <person name="Reed J."/>
            <person name="Reid J.F."/>
            <person name="Ring B.Z."/>
            <person name="Ringwald M."/>
            <person name="Rost B."/>
            <person name="Ruan Y."/>
            <person name="Salzberg S.L."/>
            <person name="Sandelin A."/>
            <person name="Schneider C."/>
            <person name="Schoenbach C."/>
            <person name="Sekiguchi K."/>
            <person name="Semple C.A."/>
            <person name="Seno S."/>
            <person name="Sessa L."/>
            <person name="Sheng Y."/>
            <person name="Shibata Y."/>
            <person name="Shimada H."/>
            <person name="Shimada K."/>
            <person name="Silva D."/>
            <person name="Sinclair B."/>
            <person name="Sperling S."/>
            <person name="Stupka E."/>
            <person name="Sugiura K."/>
            <person name="Sultana R."/>
            <person name="Takenaka Y."/>
            <person name="Taki K."/>
            <person name="Tammoja K."/>
            <person name="Tan S.L."/>
            <person name="Tang S."/>
            <person name="Taylor M.S."/>
            <person name="Tegner J."/>
            <person name="Teichmann S.A."/>
            <person name="Ueda H.R."/>
            <person name="van Nimwegen E."/>
            <person name="Verardo R."/>
            <person name="Wei C.L."/>
            <person name="Yagi K."/>
            <person name="Yamanishi H."/>
            <person name="Zabarovsky E."/>
            <person name="Zhu S."/>
            <person name="Zimmer A."/>
            <person name="Hide W."/>
            <person name="Bult C."/>
            <person name="Grimmond S.M."/>
            <person name="Teasdale R.D."/>
            <person name="Liu E.T."/>
            <person name="Brusic V."/>
            <person name="Quackenbush J."/>
            <person name="Wahlestedt C."/>
            <person name="Mattick J.S."/>
            <person name="Hume D.A."/>
            <person name="Kai C."/>
            <person name="Sasaki D."/>
            <person name="Tomaru Y."/>
            <person name="Fukuda S."/>
            <person name="Kanamori-Katayama M."/>
            <person name="Suzuki M."/>
            <person name="Aoki J."/>
            <person name="Arakawa T."/>
            <person name="Iida J."/>
            <person name="Imamura K."/>
            <person name="Itoh M."/>
            <person name="Kato T."/>
            <person name="Kawaji H."/>
            <person name="Kawagashira N."/>
            <person name="Kawashima T."/>
            <person name="Kojima M."/>
            <person name="Kondo S."/>
            <person name="Konno H."/>
            <person name="Nakano K."/>
            <person name="Ninomiya N."/>
            <person name="Nishio T."/>
            <person name="Okada M."/>
            <person name="Plessy C."/>
            <person name="Shibata K."/>
            <person name="Shiraki T."/>
            <person name="Suzuki S."/>
            <person name="Tagami M."/>
            <person name="Waki K."/>
            <person name="Watahiki A."/>
            <person name="Okamura-Oho Y."/>
            <person name="Suzuki H."/>
            <person name="Kawai J."/>
            <person name="Hayashizaki Y."/>
        </authorList>
    </citation>
    <scope>NUCLEOTIDE SEQUENCE [LARGE SCALE MRNA]</scope>
    <source>
        <strain>C57BL/6J</strain>
        <tissue>Embryo</tissue>
        <tissue>Testis</tissue>
    </source>
</reference>
<reference key="2">
    <citation type="journal article" date="2004" name="Genome Res.">
        <title>The status, quality, and expansion of the NIH full-length cDNA project: the Mammalian Gene Collection (MGC).</title>
        <authorList>
            <consortium name="The MGC Project Team"/>
        </authorList>
    </citation>
    <scope>NUCLEOTIDE SEQUENCE [LARGE SCALE MRNA]</scope>
    <source>
        <strain>C57BL/6J</strain>
        <tissue>Brain</tissue>
    </source>
</reference>
<reference key="3">
    <citation type="journal article" date="2010" name="Cell">
        <title>A tissue-specific atlas of mouse protein phosphorylation and expression.</title>
        <authorList>
            <person name="Huttlin E.L."/>
            <person name="Jedrychowski M.P."/>
            <person name="Elias J.E."/>
            <person name="Goswami T."/>
            <person name="Rad R."/>
            <person name="Beausoleil S.A."/>
            <person name="Villen J."/>
            <person name="Haas W."/>
            <person name="Sowa M.E."/>
            <person name="Gygi S.P."/>
        </authorList>
    </citation>
    <scope>PHOSPHORYLATION [LARGE SCALE ANALYSIS] AT SER-331</scope>
    <scope>IDENTIFICATION BY MASS SPECTROMETRY [LARGE SCALE ANALYSIS]</scope>
    <source>
        <tissue>Testis</tissue>
    </source>
</reference>
<gene>
    <name type="primary">Dsn1</name>
</gene>
<name>DSN1_MOUSE</name>
<protein>
    <recommendedName>
        <fullName>Kinetochore-associated protein DSN1 homolog</fullName>
    </recommendedName>
</protein>
<accession>Q9CYC5</accession>
<accession>Q9CYF2</accession>
<accession>Q9DA26</accession>
<organism>
    <name type="scientific">Mus musculus</name>
    <name type="common">Mouse</name>
    <dbReference type="NCBI Taxonomy" id="10090"/>
    <lineage>
        <taxon>Eukaryota</taxon>
        <taxon>Metazoa</taxon>
        <taxon>Chordata</taxon>
        <taxon>Craniata</taxon>
        <taxon>Vertebrata</taxon>
        <taxon>Euteleostomi</taxon>
        <taxon>Mammalia</taxon>
        <taxon>Eutheria</taxon>
        <taxon>Euarchontoglires</taxon>
        <taxon>Glires</taxon>
        <taxon>Rodentia</taxon>
        <taxon>Myomorpha</taxon>
        <taxon>Muroidea</taxon>
        <taxon>Muridae</taxon>
        <taxon>Murinae</taxon>
        <taxon>Mus</taxon>
        <taxon>Mus</taxon>
    </lineage>
</organism>
<proteinExistence type="evidence at protein level"/>
<keyword id="KW-0131">Cell cycle</keyword>
<keyword id="KW-0132">Cell division</keyword>
<keyword id="KW-0137">Centromere</keyword>
<keyword id="KW-0158">Chromosome</keyword>
<keyword id="KW-0159">Chromosome partition</keyword>
<keyword id="KW-1017">Isopeptide bond</keyword>
<keyword id="KW-0995">Kinetochore</keyword>
<keyword id="KW-0498">Mitosis</keyword>
<keyword id="KW-0539">Nucleus</keyword>
<keyword id="KW-0597">Phosphoprotein</keyword>
<keyword id="KW-1185">Reference proteome</keyword>
<keyword id="KW-0832">Ubl conjugation</keyword>
<evidence type="ECO:0000250" key="1">
    <source>
        <dbReference type="UniProtKB" id="Q9H410"/>
    </source>
</evidence>
<evidence type="ECO:0000256" key="2">
    <source>
        <dbReference type="SAM" id="MobiDB-lite"/>
    </source>
</evidence>
<evidence type="ECO:0000305" key="3"/>
<evidence type="ECO:0007744" key="4">
    <source>
    </source>
</evidence>
<dbReference type="EMBL" id="AK017813">
    <property type="protein sequence ID" value="BAB30950.1"/>
    <property type="molecule type" value="mRNA"/>
</dbReference>
<dbReference type="EMBL" id="AK006246">
    <property type="protein sequence ID" value="BAB24479.1"/>
    <property type="molecule type" value="mRNA"/>
</dbReference>
<dbReference type="EMBL" id="AK017740">
    <property type="protein sequence ID" value="BAB30906.1"/>
    <property type="molecule type" value="mRNA"/>
</dbReference>
<dbReference type="EMBL" id="BC025079">
    <property type="protein sequence ID" value="AAH25079.1"/>
    <property type="molecule type" value="mRNA"/>
</dbReference>
<dbReference type="EMBL" id="BC046807">
    <property type="protein sequence ID" value="AAH46807.1"/>
    <property type="molecule type" value="mRNA"/>
</dbReference>
<dbReference type="CCDS" id="CCDS16972.1"/>
<dbReference type="RefSeq" id="NP_080129.2">
    <property type="nucleotide sequence ID" value="NM_025853.3"/>
</dbReference>
<dbReference type="SMR" id="Q9CYC5"/>
<dbReference type="BioGRID" id="211821">
    <property type="interactions" value="1"/>
</dbReference>
<dbReference type="ComplexPortal" id="CPX-5701">
    <property type="entry name" value="Kinetochore MIS12 complex"/>
</dbReference>
<dbReference type="FunCoup" id="Q9CYC5">
    <property type="interactions" value="2476"/>
</dbReference>
<dbReference type="IntAct" id="Q9CYC5">
    <property type="interactions" value="2"/>
</dbReference>
<dbReference type="MINT" id="Q9CYC5"/>
<dbReference type="STRING" id="10090.ENSMUSP00000099419"/>
<dbReference type="iPTMnet" id="Q9CYC5"/>
<dbReference type="PhosphoSitePlus" id="Q9CYC5"/>
<dbReference type="jPOST" id="Q9CYC5"/>
<dbReference type="PaxDb" id="10090-ENSMUSP00000099418"/>
<dbReference type="PeptideAtlas" id="Q9CYC5"/>
<dbReference type="ProteomicsDB" id="275407"/>
<dbReference type="Pumba" id="Q9CYC5"/>
<dbReference type="Antibodypedia" id="1232">
    <property type="antibodies" value="182 antibodies from 26 providers"/>
</dbReference>
<dbReference type="DNASU" id="66934"/>
<dbReference type="Ensembl" id="ENSMUST00000103129.9">
    <property type="protein sequence ID" value="ENSMUSP00000099418.3"/>
    <property type="gene ID" value="ENSMUSG00000027635.16"/>
</dbReference>
<dbReference type="Ensembl" id="ENSMUST00000103130.8">
    <property type="protein sequence ID" value="ENSMUSP00000099419.2"/>
    <property type="gene ID" value="ENSMUSG00000027635.16"/>
</dbReference>
<dbReference type="GeneID" id="66934"/>
<dbReference type="KEGG" id="mmu:66934"/>
<dbReference type="UCSC" id="uc008noj.2">
    <property type="organism name" value="mouse"/>
</dbReference>
<dbReference type="AGR" id="MGI:1914184"/>
<dbReference type="CTD" id="79980"/>
<dbReference type="MGI" id="MGI:1914184">
    <property type="gene designation" value="Dsn1"/>
</dbReference>
<dbReference type="VEuPathDB" id="HostDB:ENSMUSG00000027635"/>
<dbReference type="eggNOG" id="ENOG502S0JV">
    <property type="taxonomic scope" value="Eukaryota"/>
</dbReference>
<dbReference type="GeneTree" id="ENSGT00390000011347"/>
<dbReference type="HOGENOM" id="CLU_042801_0_0_1"/>
<dbReference type="InParanoid" id="Q9CYC5"/>
<dbReference type="OMA" id="QDKSQSW"/>
<dbReference type="OrthoDB" id="10044040at2759"/>
<dbReference type="PhylomeDB" id="Q9CYC5"/>
<dbReference type="TreeFam" id="TF335504"/>
<dbReference type="Reactome" id="R-MMU-141444">
    <property type="pathway name" value="Amplification of signal from unattached kinetochores via a MAD2 inhibitory signal"/>
</dbReference>
<dbReference type="Reactome" id="R-MMU-2467813">
    <property type="pathway name" value="Separation of Sister Chromatids"/>
</dbReference>
<dbReference type="Reactome" id="R-MMU-2500257">
    <property type="pathway name" value="Resolution of Sister Chromatid Cohesion"/>
</dbReference>
<dbReference type="Reactome" id="R-MMU-5663220">
    <property type="pathway name" value="RHO GTPases Activate Formins"/>
</dbReference>
<dbReference type="Reactome" id="R-MMU-6798695">
    <property type="pathway name" value="Neutrophil degranulation"/>
</dbReference>
<dbReference type="Reactome" id="R-MMU-68877">
    <property type="pathway name" value="Mitotic Prometaphase"/>
</dbReference>
<dbReference type="Reactome" id="R-MMU-9648025">
    <property type="pathway name" value="EML4 and NUDC in mitotic spindle formation"/>
</dbReference>
<dbReference type="BioGRID-ORCS" id="66934">
    <property type="hits" value="14 hits in 80 CRISPR screens"/>
</dbReference>
<dbReference type="PRO" id="PR:Q9CYC5"/>
<dbReference type="Proteomes" id="UP000000589">
    <property type="component" value="Chromosome 2"/>
</dbReference>
<dbReference type="RNAct" id="Q9CYC5">
    <property type="molecule type" value="protein"/>
</dbReference>
<dbReference type="Bgee" id="ENSMUSG00000027635">
    <property type="expression patterns" value="Expressed in animal zygote and 198 other cell types or tissues"/>
</dbReference>
<dbReference type="ExpressionAtlas" id="Q9CYC5">
    <property type="expression patterns" value="baseline and differential"/>
</dbReference>
<dbReference type="GO" id="GO:0005829">
    <property type="term" value="C:cytosol"/>
    <property type="evidence" value="ECO:0007669"/>
    <property type="project" value="Ensembl"/>
</dbReference>
<dbReference type="GO" id="GO:0001650">
    <property type="term" value="C:fibrillar center"/>
    <property type="evidence" value="ECO:0007669"/>
    <property type="project" value="Ensembl"/>
</dbReference>
<dbReference type="GO" id="GO:0000776">
    <property type="term" value="C:kinetochore"/>
    <property type="evidence" value="ECO:0000314"/>
    <property type="project" value="MGI"/>
</dbReference>
<dbReference type="GO" id="GO:0000444">
    <property type="term" value="C:MIS12/MIND type complex"/>
    <property type="evidence" value="ECO:0000250"/>
    <property type="project" value="UniProtKB"/>
</dbReference>
<dbReference type="GO" id="GO:0016604">
    <property type="term" value="C:nuclear body"/>
    <property type="evidence" value="ECO:0007669"/>
    <property type="project" value="Ensembl"/>
</dbReference>
<dbReference type="GO" id="GO:0005634">
    <property type="term" value="C:nucleus"/>
    <property type="evidence" value="ECO:0000303"/>
    <property type="project" value="ComplexPortal"/>
</dbReference>
<dbReference type="GO" id="GO:0000922">
    <property type="term" value="C:spindle pole"/>
    <property type="evidence" value="ECO:0000303"/>
    <property type="project" value="ComplexPortal"/>
</dbReference>
<dbReference type="GO" id="GO:0008608">
    <property type="term" value="P:attachment of spindle microtubules to kinetochore"/>
    <property type="evidence" value="ECO:0000303"/>
    <property type="project" value="ComplexPortal"/>
</dbReference>
<dbReference type="GO" id="GO:0051301">
    <property type="term" value="P:cell division"/>
    <property type="evidence" value="ECO:0007669"/>
    <property type="project" value="UniProtKB-KW"/>
</dbReference>
<dbReference type="GO" id="GO:0014841">
    <property type="term" value="P:skeletal muscle satellite cell proliferation"/>
    <property type="evidence" value="ECO:0000315"/>
    <property type="project" value="MGI"/>
</dbReference>
<dbReference type="InterPro" id="IPR013218">
    <property type="entry name" value="Dsn1/Mis13"/>
</dbReference>
<dbReference type="PANTHER" id="PTHR14778">
    <property type="entry name" value="KINETOCHORE-ASSOCIATED PROTEIN DSN1 HOMOLOG"/>
    <property type="match status" value="1"/>
</dbReference>
<dbReference type="PANTHER" id="PTHR14778:SF2">
    <property type="entry name" value="KINETOCHORE-ASSOCIATED PROTEIN DSN1 HOMOLOG"/>
    <property type="match status" value="1"/>
</dbReference>
<dbReference type="Pfam" id="PF08202">
    <property type="entry name" value="MIS13"/>
    <property type="match status" value="1"/>
</dbReference>
<feature type="chain" id="PRO_0000079482" description="Kinetochore-associated protein DSN1 homolog">
    <location>
        <begin position="1"/>
        <end position="348"/>
    </location>
</feature>
<feature type="region of interest" description="Disordered" evidence="2">
    <location>
        <begin position="1"/>
        <end position="105"/>
    </location>
</feature>
<feature type="region of interest" description="Disordered" evidence="2">
    <location>
        <begin position="325"/>
        <end position="348"/>
    </location>
</feature>
<feature type="compositionally biased region" description="Polar residues" evidence="2">
    <location>
        <begin position="33"/>
        <end position="46"/>
    </location>
</feature>
<feature type="compositionally biased region" description="Polar residues" evidence="2">
    <location>
        <begin position="70"/>
        <end position="86"/>
    </location>
</feature>
<feature type="compositionally biased region" description="Basic and acidic residues" evidence="2">
    <location>
        <begin position="87"/>
        <end position="104"/>
    </location>
</feature>
<feature type="compositionally biased region" description="Low complexity" evidence="2">
    <location>
        <begin position="338"/>
        <end position="348"/>
    </location>
</feature>
<feature type="modified residue" description="Phosphoserine" evidence="1">
    <location>
        <position position="25"/>
    </location>
</feature>
<feature type="modified residue" description="Phosphoserine" evidence="1">
    <location>
        <position position="75"/>
    </location>
</feature>
<feature type="modified residue" description="Phosphoserine" evidence="1">
    <location>
        <position position="79"/>
    </location>
</feature>
<feature type="modified residue" description="Phosphoserine" evidence="1">
    <location>
        <position position="107"/>
    </location>
</feature>
<feature type="modified residue" description="Phosphoserine" evidence="1">
    <location>
        <position position="123"/>
    </location>
</feature>
<feature type="modified residue" description="Phosphoserine" evidence="4">
    <location>
        <position position="331"/>
    </location>
</feature>
<feature type="cross-link" description="Glycyl lysine isopeptide (Lys-Gly) (interchain with G-Cter in SUMO2)" evidence="1">
    <location>
        <position position="253"/>
    </location>
</feature>
<feature type="sequence conflict" description="In Ref. 1; BAB30906." evidence="3" ref="1">
    <original>R</original>
    <variation>G</variation>
    <location>
        <position position="6"/>
    </location>
</feature>
<feature type="sequence conflict" description="In Ref. 1; BAB24479." evidence="3" ref="1">
    <original>S</original>
    <variation>T</variation>
    <location>
        <position position="330"/>
    </location>
</feature>
<sequence length="348" mass="39553">MTSVTRSEDQEPTMSETQDRPLQPSLKPLEALPQSSAYQEMMTQGVSEEKNHLGSNPGEGESCGADHQEGSQLRSFHLSPQEQSIRPQDRRQSWRRASMKEVNRRKSLAPFHPGITELCRSISVKLAQSQRLGALLLSSFQFSVEKLEPFLKNTKDFSLECFRAKASSLSEELKHFTDRLGNDGTLQKCFVEDSKEKAADFSLEASVAEVKEYITKFSLERQAWDRLLLQYQNEVPPEEMPRGSTETRITEVKVDPAAYLRSSQKEVLSTKPDYQRIVQDQNQVFAYVELVMDELQGSVKQLQALMDESTQYLQKVSVQLKKRSMDQLDSSPARKLLKLPLQSSPSTQ</sequence>
<comment type="function">
    <text evidence="1">Part of the MIS12 complex which is required for normal chromosome alignment and segregation and kinetochore formation during mitosis.</text>
</comment>
<comment type="subunit">
    <text evidence="1">Component of the MIS12 complex composed of MIS12, DSN1, NSL1 and PMF1. Also interacts with KNL1, CBX3 and CBX5. Interacts with KNSTRN.</text>
</comment>
<comment type="subcellular location">
    <subcellularLocation>
        <location evidence="1">Nucleus</location>
    </subcellularLocation>
    <subcellularLocation>
        <location evidence="1">Chromosome</location>
        <location evidence="1">Centromere</location>
        <location evidence="1">Kinetochore</location>
    </subcellularLocation>
    <text evidence="1">Associated with the kinetochore.</text>
</comment>